<name>PPAX_LISMF</name>
<feature type="chain" id="PRO_0000056842" description="Pyrophosphatase PpaX">
    <location>
        <begin position="1"/>
        <end position="217"/>
    </location>
</feature>
<feature type="active site" description="Nucleophile" evidence="1">
    <location>
        <position position="11"/>
    </location>
</feature>
<reference key="1">
    <citation type="journal article" date="2004" name="Nucleic Acids Res.">
        <title>Whole genome comparisons of serotype 4b and 1/2a strains of the food-borne pathogen Listeria monocytogenes reveal new insights into the core genome components of this species.</title>
        <authorList>
            <person name="Nelson K.E."/>
            <person name="Fouts D.E."/>
            <person name="Mongodin E.F."/>
            <person name="Ravel J."/>
            <person name="DeBoy R.T."/>
            <person name="Kolonay J.F."/>
            <person name="Rasko D.A."/>
            <person name="Angiuoli S.V."/>
            <person name="Gill S.R."/>
            <person name="Paulsen I.T."/>
            <person name="Peterson J.D."/>
            <person name="White O."/>
            <person name="Nelson W.C."/>
            <person name="Nierman W.C."/>
            <person name="Beanan M.J."/>
            <person name="Brinkac L.M."/>
            <person name="Daugherty S.C."/>
            <person name="Dodson R.J."/>
            <person name="Durkin A.S."/>
            <person name="Madupu R."/>
            <person name="Haft D.H."/>
            <person name="Selengut J."/>
            <person name="Van Aken S.E."/>
            <person name="Khouri H.M."/>
            <person name="Fedorova N."/>
            <person name="Forberger H.A."/>
            <person name="Tran B."/>
            <person name="Kathariou S."/>
            <person name="Wonderling L.D."/>
            <person name="Uhlich G.A."/>
            <person name="Bayles D.O."/>
            <person name="Luchansky J.B."/>
            <person name="Fraser C.M."/>
        </authorList>
    </citation>
    <scope>NUCLEOTIDE SEQUENCE [LARGE SCALE GENOMIC DNA]</scope>
    <source>
        <strain>F2365</strain>
    </source>
</reference>
<gene>
    <name evidence="1" type="primary">ppaX</name>
    <name type="ordered locus">LMOf2365_2454</name>
</gene>
<evidence type="ECO:0000255" key="1">
    <source>
        <dbReference type="HAMAP-Rule" id="MF_01250"/>
    </source>
</evidence>
<proteinExistence type="inferred from homology"/>
<sequence>MTGKITTLLFDLDGTLINTNELIIKTFQVTFQEFMPDRVFTREDILPFIGPSLMETFREINPAHADEMRAFYREYNLKHHDDLILEYDGVYEAIRALYEEDYKLGIVSTKMYDTIMRGLKVTGLDKFFQVVIGLDQVSNAKPDPEGIEMALSLLNATKEEAIMIGDNYHDIEAGKNAETLTAGVAWAIKGPEHLAQFQPDFMLEKMSDLLAIVRDEE</sequence>
<organism>
    <name type="scientific">Listeria monocytogenes serotype 4b (strain F2365)</name>
    <dbReference type="NCBI Taxonomy" id="265669"/>
    <lineage>
        <taxon>Bacteria</taxon>
        <taxon>Bacillati</taxon>
        <taxon>Bacillota</taxon>
        <taxon>Bacilli</taxon>
        <taxon>Bacillales</taxon>
        <taxon>Listeriaceae</taxon>
        <taxon>Listeria</taxon>
    </lineage>
</organism>
<accession>Q71WU6</accession>
<dbReference type="EC" id="3.6.1.1" evidence="1"/>
<dbReference type="EMBL" id="AE017262">
    <property type="protein sequence ID" value="AAT05219.1"/>
    <property type="molecule type" value="Genomic_DNA"/>
</dbReference>
<dbReference type="RefSeq" id="WP_003725414.1">
    <property type="nucleotide sequence ID" value="NC_002973.6"/>
</dbReference>
<dbReference type="SMR" id="Q71WU6"/>
<dbReference type="KEGG" id="lmf:LMOf2365_2454"/>
<dbReference type="HOGENOM" id="CLU_045011_19_3_9"/>
<dbReference type="GO" id="GO:0005829">
    <property type="term" value="C:cytosol"/>
    <property type="evidence" value="ECO:0007669"/>
    <property type="project" value="TreeGrafter"/>
</dbReference>
<dbReference type="GO" id="GO:0004427">
    <property type="term" value="F:inorganic diphosphate phosphatase activity"/>
    <property type="evidence" value="ECO:0007669"/>
    <property type="project" value="UniProtKB-UniRule"/>
</dbReference>
<dbReference type="GO" id="GO:0000287">
    <property type="term" value="F:magnesium ion binding"/>
    <property type="evidence" value="ECO:0007669"/>
    <property type="project" value="UniProtKB-UniRule"/>
</dbReference>
<dbReference type="GO" id="GO:0008967">
    <property type="term" value="F:phosphoglycolate phosphatase activity"/>
    <property type="evidence" value="ECO:0007669"/>
    <property type="project" value="TreeGrafter"/>
</dbReference>
<dbReference type="GO" id="GO:0006281">
    <property type="term" value="P:DNA repair"/>
    <property type="evidence" value="ECO:0007669"/>
    <property type="project" value="TreeGrafter"/>
</dbReference>
<dbReference type="CDD" id="cd02616">
    <property type="entry name" value="HAD_PPase"/>
    <property type="match status" value="1"/>
</dbReference>
<dbReference type="FunFam" id="3.40.50.1000:FF:000022">
    <property type="entry name" value="Phosphoglycolate phosphatase"/>
    <property type="match status" value="1"/>
</dbReference>
<dbReference type="Gene3D" id="3.40.50.1000">
    <property type="entry name" value="HAD superfamily/HAD-like"/>
    <property type="match status" value="1"/>
</dbReference>
<dbReference type="Gene3D" id="1.10.150.240">
    <property type="entry name" value="Putative phosphatase, domain 2"/>
    <property type="match status" value="1"/>
</dbReference>
<dbReference type="HAMAP" id="MF_01250">
    <property type="entry name" value="Pyrophosphat_PpaX"/>
    <property type="match status" value="1"/>
</dbReference>
<dbReference type="InterPro" id="IPR050155">
    <property type="entry name" value="HAD-like_hydrolase_sf"/>
</dbReference>
<dbReference type="InterPro" id="IPR036412">
    <property type="entry name" value="HAD-like_sf"/>
</dbReference>
<dbReference type="InterPro" id="IPR006439">
    <property type="entry name" value="HAD-SF_hydro_IA"/>
</dbReference>
<dbReference type="InterPro" id="IPR041492">
    <property type="entry name" value="HAD_2"/>
</dbReference>
<dbReference type="InterPro" id="IPR023214">
    <property type="entry name" value="HAD_sf"/>
</dbReference>
<dbReference type="InterPro" id="IPR023198">
    <property type="entry name" value="PGP-like_dom2"/>
</dbReference>
<dbReference type="InterPro" id="IPR023733">
    <property type="entry name" value="Pyrophosphatase_Ppax"/>
</dbReference>
<dbReference type="NCBIfam" id="TIGR01549">
    <property type="entry name" value="HAD-SF-IA-v1"/>
    <property type="match status" value="1"/>
</dbReference>
<dbReference type="NCBIfam" id="NF009804">
    <property type="entry name" value="PRK13288.1"/>
    <property type="match status" value="1"/>
</dbReference>
<dbReference type="PANTHER" id="PTHR43434">
    <property type="entry name" value="PHOSPHOGLYCOLATE PHOSPHATASE"/>
    <property type="match status" value="1"/>
</dbReference>
<dbReference type="PANTHER" id="PTHR43434:SF26">
    <property type="entry name" value="PYROPHOSPHATASE PPAX"/>
    <property type="match status" value="1"/>
</dbReference>
<dbReference type="Pfam" id="PF13419">
    <property type="entry name" value="HAD_2"/>
    <property type="match status" value="1"/>
</dbReference>
<dbReference type="PRINTS" id="PR00413">
    <property type="entry name" value="HADHALOGNASE"/>
</dbReference>
<dbReference type="SFLD" id="SFLDG01135">
    <property type="entry name" value="C1.5.6:_HAD__Beta-PGM__Phospha"/>
    <property type="match status" value="1"/>
</dbReference>
<dbReference type="SFLD" id="SFLDS00003">
    <property type="entry name" value="Haloacid_Dehalogenase"/>
    <property type="match status" value="1"/>
</dbReference>
<dbReference type="SUPFAM" id="SSF56784">
    <property type="entry name" value="HAD-like"/>
    <property type="match status" value="1"/>
</dbReference>
<keyword id="KW-0378">Hydrolase</keyword>
<keyword id="KW-0460">Magnesium</keyword>
<protein>
    <recommendedName>
        <fullName evidence="1">Pyrophosphatase PpaX</fullName>
        <ecNumber evidence="1">3.6.1.1</ecNumber>
    </recommendedName>
</protein>
<comment type="function">
    <text evidence="1">Hydrolyzes pyrophosphate formed during P-Ser-HPr dephosphorylation by HPrK/P. Might play a role in controlling the intracellular pyrophosphate pool.</text>
</comment>
<comment type="catalytic activity">
    <reaction evidence="1">
        <text>diphosphate + H2O = 2 phosphate + H(+)</text>
        <dbReference type="Rhea" id="RHEA:24576"/>
        <dbReference type="ChEBI" id="CHEBI:15377"/>
        <dbReference type="ChEBI" id="CHEBI:15378"/>
        <dbReference type="ChEBI" id="CHEBI:33019"/>
        <dbReference type="ChEBI" id="CHEBI:43474"/>
        <dbReference type="EC" id="3.6.1.1"/>
    </reaction>
</comment>
<comment type="cofactor">
    <cofactor evidence="1">
        <name>Mg(2+)</name>
        <dbReference type="ChEBI" id="CHEBI:18420"/>
    </cofactor>
</comment>
<comment type="similarity">
    <text evidence="1">Belongs to the HAD-like hydrolase superfamily. PpaX family.</text>
</comment>